<organism evidence="5">
    <name type="scientific">Albidiferax ferrireducens (strain ATCC BAA-621 / DSM 15236 / T118)</name>
    <name type="common">Rhodoferax ferrireducens</name>
    <dbReference type="NCBI Taxonomy" id="338969"/>
    <lineage>
        <taxon>Bacteria</taxon>
        <taxon>Pseudomonadati</taxon>
        <taxon>Pseudomonadota</taxon>
        <taxon>Betaproteobacteria</taxon>
        <taxon>Burkholderiales</taxon>
        <taxon>Comamonadaceae</taxon>
        <taxon>Rhodoferax</taxon>
    </lineage>
</organism>
<feature type="signal peptide" evidence="2">
    <location>
        <begin position="1"/>
        <end position="25"/>
    </location>
</feature>
<feature type="chain" id="PRO_5004200133" description="Solute-binding protein Rfer_1840" evidence="2">
    <location>
        <begin position="26"/>
        <end position="338"/>
    </location>
</feature>
<feature type="binding site" evidence="7 8">
    <location>
        <position position="47"/>
    </location>
    <ligand>
        <name>malonate</name>
        <dbReference type="ChEBI" id="CHEBI:15792"/>
    </ligand>
</feature>
<feature type="binding site" evidence="7 8">
    <location>
        <position position="100"/>
    </location>
    <ligand>
        <name>malonate</name>
        <dbReference type="ChEBI" id="CHEBI:15792"/>
    </ligand>
</feature>
<feature type="binding site" evidence="7 8">
    <location>
        <position position="175"/>
    </location>
    <ligand>
        <name>malonate</name>
        <dbReference type="ChEBI" id="CHEBI:15792"/>
    </ligand>
</feature>
<feature type="binding site" evidence="7 8">
    <location>
        <position position="197"/>
    </location>
    <ligand>
        <name>malonate</name>
        <dbReference type="ChEBI" id="CHEBI:15792"/>
    </ligand>
</feature>
<feature type="binding site" evidence="7 8">
    <location>
        <begin position="214"/>
        <end position="218"/>
    </location>
    <ligand>
        <name>malonate</name>
        <dbReference type="ChEBI" id="CHEBI:15792"/>
    </ligand>
</feature>
<feature type="binding site" evidence="7 8">
    <location>
        <position position="244"/>
    </location>
    <ligand>
        <name>malonate</name>
        <dbReference type="ChEBI" id="CHEBI:15792"/>
    </ligand>
</feature>
<feature type="strand" evidence="9">
    <location>
        <begin position="31"/>
        <end position="33"/>
    </location>
</feature>
<feature type="strand" evidence="9">
    <location>
        <begin position="41"/>
        <end position="44"/>
    </location>
</feature>
<feature type="helix" evidence="9">
    <location>
        <begin position="46"/>
        <end position="62"/>
    </location>
</feature>
<feature type="strand" evidence="9">
    <location>
        <begin position="69"/>
        <end position="71"/>
    </location>
</feature>
<feature type="strand" evidence="9">
    <location>
        <begin position="75"/>
        <end position="77"/>
    </location>
</feature>
<feature type="helix" evidence="9">
    <location>
        <begin position="79"/>
        <end position="81"/>
    </location>
</feature>
<feature type="helix" evidence="9">
    <location>
        <begin position="82"/>
        <end position="87"/>
    </location>
</feature>
<feature type="strand" evidence="9">
    <location>
        <begin position="92"/>
        <end position="95"/>
    </location>
</feature>
<feature type="helix" evidence="9">
    <location>
        <begin position="98"/>
        <end position="101"/>
    </location>
</feature>
<feature type="turn" evidence="9">
    <location>
        <begin position="102"/>
        <end position="104"/>
    </location>
</feature>
<feature type="helix" evidence="9">
    <location>
        <begin position="106"/>
        <end position="111"/>
    </location>
</feature>
<feature type="helix" evidence="9">
    <location>
        <begin position="120"/>
        <end position="125"/>
    </location>
</feature>
<feature type="helix" evidence="9">
    <location>
        <begin position="126"/>
        <end position="128"/>
    </location>
</feature>
<feature type="helix" evidence="9">
    <location>
        <begin position="130"/>
        <end position="141"/>
    </location>
</feature>
<feature type="strand" evidence="9">
    <location>
        <begin position="144"/>
        <end position="148"/>
    </location>
</feature>
<feature type="strand" evidence="9">
    <location>
        <begin position="151"/>
        <end position="161"/>
    </location>
</feature>
<feature type="helix" evidence="9">
    <location>
        <begin position="166"/>
        <end position="169"/>
    </location>
</feature>
<feature type="strand" evidence="9">
    <location>
        <begin position="173"/>
        <end position="175"/>
    </location>
</feature>
<feature type="helix" evidence="9">
    <location>
        <begin position="179"/>
        <end position="187"/>
    </location>
</feature>
<feature type="helix" evidence="9">
    <location>
        <begin position="197"/>
        <end position="199"/>
    </location>
</feature>
<feature type="helix" evidence="9">
    <location>
        <begin position="200"/>
        <end position="205"/>
    </location>
</feature>
<feature type="strand" evidence="9">
    <location>
        <begin position="210"/>
        <end position="215"/>
    </location>
</feature>
<feature type="helix" evidence="9">
    <location>
        <begin position="216"/>
        <end position="221"/>
    </location>
</feature>
<feature type="helix" evidence="9">
    <location>
        <begin position="224"/>
        <end position="226"/>
    </location>
</feature>
<feature type="strand" evidence="9">
    <location>
        <begin position="229"/>
        <end position="232"/>
    </location>
</feature>
<feature type="strand" evidence="9">
    <location>
        <begin position="241"/>
        <end position="243"/>
    </location>
</feature>
<feature type="strand" evidence="9">
    <location>
        <begin position="246"/>
        <end position="249"/>
    </location>
</feature>
<feature type="helix" evidence="9">
    <location>
        <begin position="250"/>
        <end position="255"/>
    </location>
</feature>
<feature type="helix" evidence="9">
    <location>
        <begin position="258"/>
        <end position="292"/>
    </location>
</feature>
<feature type="strand" evidence="9">
    <location>
        <begin position="296"/>
        <end position="298"/>
    </location>
</feature>
<feature type="helix" evidence="9">
    <location>
        <begin position="302"/>
        <end position="314"/>
    </location>
</feature>
<feature type="helix" evidence="9">
    <location>
        <begin position="316"/>
        <end position="323"/>
    </location>
</feature>
<feature type="helix" evidence="9">
    <location>
        <begin position="325"/>
        <end position="338"/>
    </location>
</feature>
<protein>
    <recommendedName>
        <fullName evidence="4">Solute-binding protein Rfer_1840</fullName>
    </recommendedName>
</protein>
<name>DCTP_ALBFT</name>
<accession>Q21XD7</accession>
<evidence type="ECO:0000250" key="1">
    <source>
        <dbReference type="UniProtKB" id="P37735"/>
    </source>
</evidence>
<evidence type="ECO:0000255" key="2"/>
<evidence type="ECO:0000269" key="3">
    <source>
    </source>
</evidence>
<evidence type="ECO:0000305" key="4"/>
<evidence type="ECO:0000312" key="5">
    <source>
        <dbReference type="EMBL" id="ABD69566.1"/>
    </source>
</evidence>
<evidence type="ECO:0000312" key="6">
    <source>
        <dbReference type="Proteomes" id="UP000008332"/>
    </source>
</evidence>
<evidence type="ECO:0007744" key="7">
    <source>
        <dbReference type="PDB" id="4MCO"/>
    </source>
</evidence>
<evidence type="ECO:0007744" key="8">
    <source>
        <dbReference type="PDB" id="4MEV"/>
    </source>
</evidence>
<evidence type="ECO:0007829" key="9">
    <source>
        <dbReference type="PDB" id="4MCO"/>
    </source>
</evidence>
<comment type="function">
    <text evidence="3 4">Solute-binding protein that binds malonate (in vitro) (PubMed:25540822). Probably part of a tripartite ATP-independent periplasmic (TRAP) transport system that mediates solute transport into the cytoplasm.</text>
</comment>
<comment type="subunit">
    <text evidence="1">The complex is comprised of an extracytoplasmic solute-binding protein and a heteromeric permease formed by two transmembrane proteins.</text>
</comment>
<comment type="subcellular location">
    <subcellularLocation>
        <location evidence="1">Periplasm</location>
    </subcellularLocation>
</comment>
<comment type="similarity">
    <text evidence="4">Belongs to the bacterial solute-binding protein 7 family.</text>
</comment>
<gene>
    <name evidence="5" type="ordered locus">Rfer_1840</name>
</gene>
<sequence>MQRRQLLQSMGGLAASTMPFSLAFAQTSALKISHQFPGGTIKEGDFRDRLVRNFAAEVEKRSKGAMKFEIYPGSSLMKTNAQFSSMRKGALDMALIPLSYAGGEVPELNIGLMPGLVVSYEQAYSWKTKPVGIELTRVLQEKGIVLISWIWQAGGVASRGKPVVEPEDAKGMKIRGGSREMDMILKDAGAAVVSLPSNEIYAAMQTGAMDAAMTSSTSFISFRLEEVAKALTTGRTGAYWFMFEPLMMSKAIFDKLPKDQRDMLMTVGAEMEKFALEAAKKDDIDVAAVYQKAGAKVVDLSDGTIKKWQDIARKTAWKDYGAKNEGCAKLLALAQQTL</sequence>
<dbReference type="EMBL" id="CP000267">
    <property type="protein sequence ID" value="ABD69566.1"/>
    <property type="molecule type" value="Genomic_DNA"/>
</dbReference>
<dbReference type="RefSeq" id="WP_011464134.1">
    <property type="nucleotide sequence ID" value="NC_007908.1"/>
</dbReference>
<dbReference type="PDB" id="4MCO">
    <property type="method" value="X-ray"/>
    <property type="resolution" value="1.60 A"/>
    <property type="chains" value="A/B/C=1-338"/>
</dbReference>
<dbReference type="PDB" id="4MEV">
    <property type="method" value="X-ray"/>
    <property type="resolution" value="1.80 A"/>
    <property type="chains" value="A=1-338"/>
</dbReference>
<dbReference type="PDBsum" id="4MCO"/>
<dbReference type="PDBsum" id="4MEV"/>
<dbReference type="SMR" id="Q21XD7"/>
<dbReference type="STRING" id="338969.Rfer_1840"/>
<dbReference type="KEGG" id="rfr:Rfer_1840"/>
<dbReference type="eggNOG" id="COG1638">
    <property type="taxonomic scope" value="Bacteria"/>
</dbReference>
<dbReference type="HOGENOM" id="CLU_036176_1_3_4"/>
<dbReference type="OrthoDB" id="9794826at2"/>
<dbReference type="EvolutionaryTrace" id="Q21XD7"/>
<dbReference type="Proteomes" id="UP000008332">
    <property type="component" value="Chromosome"/>
</dbReference>
<dbReference type="GO" id="GO:0042597">
    <property type="term" value="C:periplasmic space"/>
    <property type="evidence" value="ECO:0007669"/>
    <property type="project" value="UniProtKB-SubCell"/>
</dbReference>
<dbReference type="GO" id="GO:0015740">
    <property type="term" value="P:C4-dicarboxylate transport"/>
    <property type="evidence" value="ECO:0007669"/>
    <property type="project" value="TreeGrafter"/>
</dbReference>
<dbReference type="GO" id="GO:0055085">
    <property type="term" value="P:transmembrane transport"/>
    <property type="evidence" value="ECO:0007669"/>
    <property type="project" value="InterPro"/>
</dbReference>
<dbReference type="CDD" id="cd13680">
    <property type="entry name" value="PBP2_TRAP_SBP_like_4"/>
    <property type="match status" value="1"/>
</dbReference>
<dbReference type="Gene3D" id="3.40.190.170">
    <property type="entry name" value="Bacterial extracellular solute-binding protein, family 7"/>
    <property type="match status" value="1"/>
</dbReference>
<dbReference type="InterPro" id="IPR018389">
    <property type="entry name" value="DctP_fam"/>
</dbReference>
<dbReference type="InterPro" id="IPR038404">
    <property type="entry name" value="TRAP_DctP_sf"/>
</dbReference>
<dbReference type="NCBIfam" id="NF037995">
    <property type="entry name" value="TRAP_S1"/>
    <property type="match status" value="1"/>
</dbReference>
<dbReference type="PANTHER" id="PTHR33376">
    <property type="match status" value="1"/>
</dbReference>
<dbReference type="PANTHER" id="PTHR33376:SF7">
    <property type="entry name" value="C4-DICARBOXYLATE-BINDING PROTEIN DCTB"/>
    <property type="match status" value="1"/>
</dbReference>
<dbReference type="Pfam" id="PF03480">
    <property type="entry name" value="DctP"/>
    <property type="match status" value="1"/>
</dbReference>
<keyword id="KW-0002">3D-structure</keyword>
<keyword id="KW-0574">Periplasm</keyword>
<keyword id="KW-1185">Reference proteome</keyword>
<keyword id="KW-0732">Signal</keyword>
<keyword id="KW-0813">Transport</keyword>
<proteinExistence type="evidence at protein level"/>
<reference evidence="6" key="1">
    <citation type="submission" date="2006-02" db="EMBL/GenBank/DDBJ databases">
        <title>Complete sequence of chromosome of Rhodoferax ferrireducens DSM 15236.</title>
        <authorList>
            <person name="Copeland A."/>
            <person name="Lucas S."/>
            <person name="Lapidus A."/>
            <person name="Barry K."/>
            <person name="Detter J.C."/>
            <person name="Glavina del Rio T."/>
            <person name="Hammon N."/>
            <person name="Israni S."/>
            <person name="Pitluck S."/>
            <person name="Brettin T."/>
            <person name="Bruce D."/>
            <person name="Han C."/>
            <person name="Tapia R."/>
            <person name="Gilna P."/>
            <person name="Kiss H."/>
            <person name="Schmutz J."/>
            <person name="Larimer F."/>
            <person name="Land M."/>
            <person name="Kyrpides N."/>
            <person name="Ivanova N."/>
            <person name="Richardson P."/>
        </authorList>
    </citation>
    <scope>NUCLEOTIDE SEQUENCE [LARGE SCALE GENOMIC DNA]</scope>
    <source>
        <strain evidence="6">ATCC BAA-621 / DSM 15236 / T118</strain>
    </source>
</reference>
<reference evidence="7 8" key="2">
    <citation type="journal article" date="2015" name="Biochemistry">
        <title>Experimental strategies for functional annotation and metabolism discovery: targeted screening of solute binding proteins and unbiased panning of metabolomes.</title>
        <authorList>
            <person name="Vetting M.W."/>
            <person name="Al-Obaidi N."/>
            <person name="Zhao S."/>
            <person name="San Francisco B."/>
            <person name="Kim J."/>
            <person name="Wichelecki D.J."/>
            <person name="Bouvier J.T."/>
            <person name="Solbiati J.O."/>
            <person name="Vu H."/>
            <person name="Zhang X."/>
            <person name="Rodionov D.A."/>
            <person name="Love J.D."/>
            <person name="Hillerich B.S."/>
            <person name="Seidel R.D."/>
            <person name="Quinn R.J."/>
            <person name="Osterman A.L."/>
            <person name="Cronan J.E."/>
            <person name="Jacobson M.P."/>
            <person name="Gerlt J.A."/>
            <person name="Almo S.C."/>
        </authorList>
    </citation>
    <scope>X-RAY CRYSTALLOGRAPHY (1.60 ANGSTROMS) IN COMPLEX WITH MALONATE</scope>
    <scope>FUNCTION</scope>
</reference>